<organism>
    <name type="scientific">Homo sapiens</name>
    <name type="common">Human</name>
    <dbReference type="NCBI Taxonomy" id="9606"/>
    <lineage>
        <taxon>Eukaryota</taxon>
        <taxon>Metazoa</taxon>
        <taxon>Chordata</taxon>
        <taxon>Craniata</taxon>
        <taxon>Vertebrata</taxon>
        <taxon>Euteleostomi</taxon>
        <taxon>Mammalia</taxon>
        <taxon>Eutheria</taxon>
        <taxon>Euarchontoglires</taxon>
        <taxon>Primates</taxon>
        <taxon>Haplorrhini</taxon>
        <taxon>Catarrhini</taxon>
        <taxon>Hominidae</taxon>
        <taxon>Homo</taxon>
    </lineage>
</organism>
<feature type="chain" id="PRO_0000286443" description="Protein phosphatase 1 regulatory subunit 1C">
    <location>
        <begin position="1"/>
        <end position="109"/>
    </location>
</feature>
<feature type="region of interest" description="Disordered" evidence="2">
    <location>
        <begin position="25"/>
        <end position="109"/>
    </location>
</feature>
<feature type="compositionally biased region" description="Basic and acidic residues" evidence="2">
    <location>
        <begin position="45"/>
        <end position="54"/>
    </location>
</feature>
<feature type="compositionally biased region" description="Polar residues" evidence="2">
    <location>
        <begin position="55"/>
        <end position="75"/>
    </location>
</feature>
<feature type="compositionally biased region" description="Basic and acidic residues" evidence="2">
    <location>
        <begin position="100"/>
        <end position="109"/>
    </location>
</feature>
<feature type="splice variant" id="VSP_025061" description="In isoform 2." evidence="5">
    <original>Q</original>
    <variation>QLGFCRSQ</variation>
    <location>
        <position position="27"/>
    </location>
</feature>
<feature type="sequence conflict" description="In Ref. 2; CAI46089." evidence="6" ref="2">
    <original>H</original>
    <variation>Y</variation>
    <location>
        <position position="84"/>
    </location>
</feature>
<comment type="function">
    <text evidence="4">May increase cell susceptibility to TNF-induced apoptosis.</text>
</comment>
<comment type="interaction">
    <interactant intactId="EBI-23791378">
        <id>Q8WVI7</id>
    </interactant>
    <interactant intactId="EBI-1042571">
        <id>Q9Y5L0</id>
        <label>TNPO3</label>
    </interactant>
    <organismsDiffer>false</organismsDiffer>
    <experiments>3</experiments>
</comment>
<comment type="subcellular location">
    <subcellularLocation>
        <location evidence="1">Cytoplasm</location>
    </subcellularLocation>
</comment>
<comment type="alternative products">
    <event type="alternative splicing"/>
    <isoform>
        <id>Q8WVI7-1</id>
        <name>1</name>
        <sequence type="displayed"/>
    </isoform>
    <isoform>
        <id>Q8WVI7-2</id>
        <name>2</name>
        <sequence type="described" ref="VSP_025061"/>
    </isoform>
</comment>
<comment type="similarity">
    <text evidence="6">Belongs to the protein phosphatase inhibitor 1 family.</text>
</comment>
<comment type="caution">
    <text evidence="7">A report observed N-glycosylation at Asn-89 (PubMed:19139490). However, as the protein is not predicted to localize in an extracellular compartment of the cell, additional evidence is required to confirm this result.</text>
</comment>
<comment type="caution">
    <text evidence="3 8">Was shown to be an inhibitor of protein-phosphatase 1, to promote cell growth and cell cycle progress at the G1/S transition and to interact with PPP1CB (PubMed:18310074). The article has later been withdrawn by the authors.</text>
</comment>
<gene>
    <name type="primary">PPP1R1C</name>
</gene>
<evidence type="ECO:0000250" key="1"/>
<evidence type="ECO:0000256" key="2">
    <source>
        <dbReference type="SAM" id="MobiDB-lite"/>
    </source>
</evidence>
<evidence type="ECO:0000269" key="3">
    <source>
    </source>
</evidence>
<evidence type="ECO:0000269" key="4">
    <source>
    </source>
</evidence>
<evidence type="ECO:0000303" key="5">
    <source ref="1"/>
</evidence>
<evidence type="ECO:0000305" key="6"/>
<evidence type="ECO:0000305" key="7">
    <source>
    </source>
</evidence>
<evidence type="ECO:0000305" key="8">
    <source>
    </source>
</evidence>
<sequence>MEPNSPKKIQFAVPVFQSQIAPEAAEQIRKRRPTPASLVILNEHNPPEIDDKRGPNTQGELQNASPKQRKQSVYTPPTIKGVKHLKGQNESAFPEEEEGTNEREEQRDH</sequence>
<proteinExistence type="evidence at protein level"/>
<name>PPR1C_HUMAN</name>
<protein>
    <recommendedName>
        <fullName>Protein phosphatase 1 regulatory subunit 1C</fullName>
    </recommendedName>
    <alternativeName>
        <fullName>Inhibitor-5 of protein phosphatase 1</fullName>
        <shortName>IPP5</shortName>
    </alternativeName>
</protein>
<reference key="1">
    <citation type="submission" date="2002-03" db="EMBL/GenBank/DDBJ databases">
        <authorList>
            <person name="Li N."/>
            <person name="Wan T."/>
            <person name="Zhang W."/>
            <person name="Cao X."/>
        </authorList>
    </citation>
    <scope>NUCLEOTIDE SEQUENCE [MRNA] (ISOFORM 2)</scope>
</reference>
<reference key="2">
    <citation type="journal article" date="2007" name="BMC Genomics">
        <title>The full-ORF clone resource of the German cDNA consortium.</title>
        <authorList>
            <person name="Bechtel S."/>
            <person name="Rosenfelder H."/>
            <person name="Duda A."/>
            <person name="Schmidt C.P."/>
            <person name="Ernst U."/>
            <person name="Wellenreuther R."/>
            <person name="Mehrle A."/>
            <person name="Schuster C."/>
            <person name="Bahr A."/>
            <person name="Bloecker H."/>
            <person name="Heubner D."/>
            <person name="Hoerlein A."/>
            <person name="Michel G."/>
            <person name="Wedler H."/>
            <person name="Koehrer K."/>
            <person name="Ottenwaelder B."/>
            <person name="Poustka A."/>
            <person name="Wiemann S."/>
            <person name="Schupp I."/>
        </authorList>
    </citation>
    <scope>NUCLEOTIDE SEQUENCE [LARGE SCALE MRNA] (ISOFORM 1)</scope>
    <source>
        <tissue>Heart</tissue>
    </source>
</reference>
<reference key="3">
    <citation type="journal article" date="2004" name="Genome Res.">
        <title>The status, quality, and expansion of the NIH full-length cDNA project: the Mammalian Gene Collection (MGC).</title>
        <authorList>
            <consortium name="The MGC Project Team"/>
        </authorList>
    </citation>
    <scope>NUCLEOTIDE SEQUENCE [LARGE SCALE MRNA] (ISOFORM 1)</scope>
    <source>
        <tissue>Skeletal muscle</tissue>
    </source>
</reference>
<reference key="4">
    <citation type="journal article" date="2008" name="J. Biol. Chem.">
        <title>IPP5, a novel protein inhibitor of protein phosphatase 1, promotes G1/S progression in a Thr-40-dependent manner.</title>
        <authorList>
            <person name="Wang X."/>
            <person name="Liu B."/>
            <person name="Li N."/>
            <person name="Li H."/>
            <person name="Qiu J."/>
            <person name="Zhang Y."/>
            <person name="Cao X."/>
        </authorList>
    </citation>
    <scope>RETRACTED PAPER</scope>
</reference>
<reference key="5">
    <citation type="journal article" date="2015" name="J. Biol. Chem.">
        <title>IPP5, a novel protein inhibitor of protein phosphatase 1, promotes G1/S progression in a Thr-40-dependent manner.</title>
        <authorList>
            <person name="Wang X."/>
            <person name="Liu B."/>
            <person name="Li N."/>
            <person name="Li H."/>
            <person name="Qiu J."/>
            <person name="Zhang Y."/>
            <person name="Cao X."/>
        </authorList>
    </citation>
    <scope>RETRACTION NOTICE OF PUBMED:18310074</scope>
</reference>
<reference key="6">
    <citation type="journal article" date="2009" name="Biotechnol. Appl. Biochem.">
        <title>Effect of IPP5, a novel inhibitor of PP1, on apoptosis and the underlying mechanisms involved.</title>
        <authorList>
            <person name="Zeng Q."/>
            <person name="Huang Y."/>
            <person name="Zeng L."/>
            <person name="Lan X."/>
            <person name="Huang Y."/>
            <person name="He S."/>
            <person name="Zhang H."/>
        </authorList>
    </citation>
    <scope>FUNCTION</scope>
</reference>
<reference key="7">
    <citation type="journal article" date="2009" name="Mol. Cell. Proteomics">
        <title>A strategy for precise and large scale identification of core fucosylated glycoproteins.</title>
        <authorList>
            <person name="Jia W."/>
            <person name="Lu Z."/>
            <person name="Fu Y."/>
            <person name="Wang H.P."/>
            <person name="Wang L.H."/>
            <person name="Chi H."/>
            <person name="Yuan Z.F."/>
            <person name="Zheng Z.B."/>
            <person name="Song L.N."/>
            <person name="Han H.H."/>
            <person name="Liang Y.M."/>
            <person name="Wang J.L."/>
            <person name="Cai Y."/>
            <person name="Zhang Y.K."/>
            <person name="Deng Y.L."/>
            <person name="Ying W.T."/>
            <person name="He S.M."/>
            <person name="Qian X.H."/>
        </authorList>
    </citation>
    <scope>IDENTIFICATION</scope>
</reference>
<dbReference type="EMBL" id="AF494535">
    <property type="protein sequence ID" value="AAM18054.1"/>
    <property type="molecule type" value="mRNA"/>
</dbReference>
<dbReference type="EMBL" id="BX647581">
    <property type="protein sequence ID" value="CAI46089.1"/>
    <property type="molecule type" value="mRNA"/>
</dbReference>
<dbReference type="EMBL" id="BC017943">
    <property type="protein sequence ID" value="AAH17943.1"/>
    <property type="molecule type" value="mRNA"/>
</dbReference>
<dbReference type="CCDS" id="CCDS46468.1">
    <molecule id="Q8WVI7-1"/>
</dbReference>
<dbReference type="CCDS" id="CCDS58740.1">
    <molecule id="Q8WVI7-2"/>
</dbReference>
<dbReference type="RefSeq" id="NP_001074014.1">
    <molecule id="Q8WVI7-1"/>
    <property type="nucleotide sequence ID" value="NM_001080545.3"/>
</dbReference>
<dbReference type="RefSeq" id="NP_001248353.1">
    <molecule id="Q8WVI7-2"/>
    <property type="nucleotide sequence ID" value="NM_001261424.2"/>
</dbReference>
<dbReference type="RefSeq" id="NP_001248354.1">
    <molecule id="Q8WVI7-1"/>
    <property type="nucleotide sequence ID" value="NM_001261425.2"/>
</dbReference>
<dbReference type="BioGRID" id="127356">
    <property type="interactions" value="1"/>
</dbReference>
<dbReference type="FunCoup" id="Q8WVI7">
    <property type="interactions" value="565"/>
</dbReference>
<dbReference type="IntAct" id="Q8WVI7">
    <property type="interactions" value="1"/>
</dbReference>
<dbReference type="STRING" id="9606.ENSP00000280295"/>
<dbReference type="iPTMnet" id="Q8WVI7"/>
<dbReference type="PhosphoSitePlus" id="Q8WVI7"/>
<dbReference type="BioMuta" id="PPP1R1C"/>
<dbReference type="DMDM" id="74730857"/>
<dbReference type="jPOST" id="Q8WVI7"/>
<dbReference type="MassIVE" id="Q8WVI7"/>
<dbReference type="PaxDb" id="9606-ENSP00000280295"/>
<dbReference type="PeptideAtlas" id="Q8WVI7"/>
<dbReference type="ProteomicsDB" id="74796">
    <molecule id="Q8WVI7-1"/>
</dbReference>
<dbReference type="ProteomicsDB" id="74797">
    <molecule id="Q8WVI7-2"/>
</dbReference>
<dbReference type="Antibodypedia" id="33985">
    <property type="antibodies" value="97 antibodies from 26 providers"/>
</dbReference>
<dbReference type="DNASU" id="151242"/>
<dbReference type="Ensembl" id="ENST00000280295.7">
    <molecule id="Q8WVI7-2"/>
    <property type="protein sequence ID" value="ENSP00000280295.3"/>
    <property type="gene ID" value="ENSG00000150722.11"/>
</dbReference>
<dbReference type="Ensembl" id="ENST00000409137.7">
    <molecule id="Q8WVI7-1"/>
    <property type="protein sequence ID" value="ENSP00000386359.3"/>
    <property type="gene ID" value="ENSG00000150722.11"/>
</dbReference>
<dbReference type="Ensembl" id="ENST00000409702.1">
    <molecule id="Q8WVI7-1"/>
    <property type="protein sequence ID" value="ENSP00000386778.1"/>
    <property type="gene ID" value="ENSG00000150722.11"/>
</dbReference>
<dbReference type="Ensembl" id="ENST00000682840.1">
    <molecule id="Q8WVI7-1"/>
    <property type="protein sequence ID" value="ENSP00000507052.1"/>
    <property type="gene ID" value="ENSG00000150722.11"/>
</dbReference>
<dbReference type="GeneID" id="151242"/>
<dbReference type="KEGG" id="hsa:151242"/>
<dbReference type="MANE-Select" id="ENST00000682840.1">
    <property type="protein sequence ID" value="ENSP00000507052.1"/>
    <property type="RefSeq nucleotide sequence ID" value="NM_001080545.3"/>
    <property type="RefSeq protein sequence ID" value="NP_001074014.1"/>
</dbReference>
<dbReference type="UCSC" id="uc002uop.3">
    <molecule id="Q8WVI7-1"/>
    <property type="organism name" value="human"/>
</dbReference>
<dbReference type="AGR" id="HGNC:14940"/>
<dbReference type="CTD" id="151242"/>
<dbReference type="DisGeNET" id="151242"/>
<dbReference type="GeneCards" id="PPP1R1C"/>
<dbReference type="HGNC" id="HGNC:14940">
    <property type="gene designation" value="PPP1R1C"/>
</dbReference>
<dbReference type="HPA" id="ENSG00000150722">
    <property type="expression patterns" value="Tissue enriched (heart)"/>
</dbReference>
<dbReference type="MIM" id="613240">
    <property type="type" value="gene"/>
</dbReference>
<dbReference type="neXtProt" id="NX_Q8WVI7"/>
<dbReference type="OpenTargets" id="ENSG00000150722"/>
<dbReference type="PharmGKB" id="PA33640"/>
<dbReference type="VEuPathDB" id="HostDB:ENSG00000150722"/>
<dbReference type="eggNOG" id="ENOG502S35G">
    <property type="taxonomic scope" value="Eukaryota"/>
</dbReference>
<dbReference type="GeneTree" id="ENSGT00940000160192"/>
<dbReference type="HOGENOM" id="CLU_092269_4_0_1"/>
<dbReference type="InParanoid" id="Q8WVI7"/>
<dbReference type="OMA" id="VNEREDQ"/>
<dbReference type="OrthoDB" id="9940275at2759"/>
<dbReference type="PAN-GO" id="Q8WVI7">
    <property type="GO annotations" value="2 GO annotations based on evolutionary models"/>
</dbReference>
<dbReference type="PhylomeDB" id="Q8WVI7"/>
<dbReference type="TreeFam" id="TF332576"/>
<dbReference type="PathwayCommons" id="Q8WVI7"/>
<dbReference type="SignaLink" id="Q8WVI7"/>
<dbReference type="SIGNOR" id="Q8WVI7"/>
<dbReference type="BioGRID-ORCS" id="151242">
    <property type="hits" value="7 hits in 1111 CRISPR screens"/>
</dbReference>
<dbReference type="GenomeRNAi" id="151242"/>
<dbReference type="Pharos" id="Q8WVI7">
    <property type="development level" value="Tbio"/>
</dbReference>
<dbReference type="PRO" id="PR:Q8WVI7"/>
<dbReference type="Proteomes" id="UP000005640">
    <property type="component" value="Chromosome 2"/>
</dbReference>
<dbReference type="RNAct" id="Q8WVI7">
    <property type="molecule type" value="protein"/>
</dbReference>
<dbReference type="Bgee" id="ENSG00000150722">
    <property type="expression patterns" value="Expressed in left testis and 115 other cell types or tissues"/>
</dbReference>
<dbReference type="GO" id="GO:0005737">
    <property type="term" value="C:cytoplasm"/>
    <property type="evidence" value="ECO:0000318"/>
    <property type="project" value="GO_Central"/>
</dbReference>
<dbReference type="GO" id="GO:0004864">
    <property type="term" value="F:protein phosphatase inhibitor activity"/>
    <property type="evidence" value="ECO:0007669"/>
    <property type="project" value="UniProtKB-KW"/>
</dbReference>
<dbReference type="GO" id="GO:0051301">
    <property type="term" value="P:cell division"/>
    <property type="evidence" value="ECO:0007669"/>
    <property type="project" value="UniProtKB-KW"/>
</dbReference>
<dbReference type="GO" id="GO:0035556">
    <property type="term" value="P:intracellular signal transduction"/>
    <property type="evidence" value="ECO:0000318"/>
    <property type="project" value="GO_Central"/>
</dbReference>
<dbReference type="InterPro" id="IPR008466">
    <property type="entry name" value="PPP1R1A/B/C"/>
</dbReference>
<dbReference type="PANTHER" id="PTHR15417:SF5">
    <property type="entry name" value="PROTEIN PHOSPHATASE 1 REGULATORY SUBUNIT 1C"/>
    <property type="match status" value="1"/>
</dbReference>
<dbReference type="PANTHER" id="PTHR15417">
    <property type="entry name" value="PROTEIN PHOSPHATASE INHIBITOR AND DOPAMINE- AND CAMP-REGULATED NEURONAL PHOSPHOPROTEIN"/>
    <property type="match status" value="1"/>
</dbReference>
<dbReference type="Pfam" id="PF05395">
    <property type="entry name" value="DARPP-32"/>
    <property type="match status" value="1"/>
</dbReference>
<accession>Q8WVI7</accession>
<accession>Q5HYJ5</accession>
<accession>Q8TD54</accession>
<keyword id="KW-0025">Alternative splicing</keyword>
<keyword id="KW-0131">Cell cycle</keyword>
<keyword id="KW-0132">Cell division</keyword>
<keyword id="KW-0963">Cytoplasm</keyword>
<keyword id="KW-0650">Protein phosphatase inhibitor</keyword>
<keyword id="KW-1267">Proteomics identification</keyword>
<keyword id="KW-1185">Reference proteome</keyword>